<accession>Q9X796</accession>
<proteinExistence type="inferred from homology"/>
<organism>
    <name type="scientific">Mycobacterium leprae (strain TN)</name>
    <dbReference type="NCBI Taxonomy" id="272631"/>
    <lineage>
        <taxon>Bacteria</taxon>
        <taxon>Bacillati</taxon>
        <taxon>Actinomycetota</taxon>
        <taxon>Actinomycetes</taxon>
        <taxon>Mycobacteriales</taxon>
        <taxon>Mycobacteriaceae</taxon>
        <taxon>Mycobacterium</taxon>
    </lineage>
</organism>
<reference key="1">
    <citation type="journal article" date="2001" name="Nature">
        <title>Massive gene decay in the leprosy bacillus.</title>
        <authorList>
            <person name="Cole S.T."/>
            <person name="Eiglmeier K."/>
            <person name="Parkhill J."/>
            <person name="James K.D."/>
            <person name="Thomson N.R."/>
            <person name="Wheeler P.R."/>
            <person name="Honore N."/>
            <person name="Garnier T."/>
            <person name="Churcher C.M."/>
            <person name="Harris D.E."/>
            <person name="Mungall K.L."/>
            <person name="Basham D."/>
            <person name="Brown D."/>
            <person name="Chillingworth T."/>
            <person name="Connor R."/>
            <person name="Davies R.M."/>
            <person name="Devlin K."/>
            <person name="Duthoy S."/>
            <person name="Feltwell T."/>
            <person name="Fraser A."/>
            <person name="Hamlin N."/>
            <person name="Holroyd S."/>
            <person name="Hornsby T."/>
            <person name="Jagels K."/>
            <person name="Lacroix C."/>
            <person name="Maclean J."/>
            <person name="Moule S."/>
            <person name="Murphy L.D."/>
            <person name="Oliver K."/>
            <person name="Quail M.A."/>
            <person name="Rajandream M.A."/>
            <person name="Rutherford K.M."/>
            <person name="Rutter S."/>
            <person name="Seeger K."/>
            <person name="Simon S."/>
            <person name="Simmonds M."/>
            <person name="Skelton J."/>
            <person name="Squares R."/>
            <person name="Squares S."/>
            <person name="Stevens K."/>
            <person name="Taylor K."/>
            <person name="Whitehead S."/>
            <person name="Woodward J.R."/>
            <person name="Barrell B.G."/>
        </authorList>
    </citation>
    <scope>NUCLEOTIDE SEQUENCE [LARGE SCALE GENOMIC DNA]</scope>
    <source>
        <strain>TN</strain>
    </source>
</reference>
<sequence>MTRPPNISEDVRLRLDIAYDGTDFAGWAVQAGQRTVAGLDEAFTTVFRTPVRLRAAGRTDTGVHATGQVAHVDIPGTALSKANPRSPHTGDPEFLPLLRRLSRLLPVDVRVLDIACAPVGFDARFSALRRHYRYRLSTAPYGVQPNQARYVTAWPRELDLDSMSAASRDLLGLRDFAVFCRHRHGATTIRELQRLEWSREGYLITAHITADAFCWSMVRSLIGALLAVGDHRRTIGWCGELLTKASRSSDFTTAPAHGLTFIRVDYPPDDELAERAVITRDLRSSF</sequence>
<keyword id="KW-0413">Isomerase</keyword>
<keyword id="KW-1185">Reference proteome</keyword>
<keyword id="KW-0819">tRNA processing</keyword>
<name>TRUA_MYCLE</name>
<comment type="function">
    <text evidence="1">Formation of pseudouridine at positions 38, 39 and 40 in the anticodon stem and loop of transfer RNAs.</text>
</comment>
<comment type="catalytic activity">
    <reaction evidence="1">
        <text>uridine(38/39/40) in tRNA = pseudouridine(38/39/40) in tRNA</text>
        <dbReference type="Rhea" id="RHEA:22376"/>
        <dbReference type="Rhea" id="RHEA-COMP:10085"/>
        <dbReference type="Rhea" id="RHEA-COMP:10087"/>
        <dbReference type="ChEBI" id="CHEBI:65314"/>
        <dbReference type="ChEBI" id="CHEBI:65315"/>
        <dbReference type="EC" id="5.4.99.12"/>
    </reaction>
</comment>
<comment type="subunit">
    <text evidence="1">Homodimer.</text>
</comment>
<comment type="similarity">
    <text evidence="1">Belongs to the tRNA pseudouridine synthase TruA family.</text>
</comment>
<comment type="sequence caution" evidence="2">
    <conflict type="erroneous initiation">
        <sequence resource="EMBL-CDS" id="CAB39831"/>
    </conflict>
</comment>
<comment type="sequence caution" evidence="2">
    <conflict type="erroneous initiation">
        <sequence resource="EMBL-CDS" id="CAC30910"/>
    </conflict>
</comment>
<evidence type="ECO:0000255" key="1">
    <source>
        <dbReference type="HAMAP-Rule" id="MF_00171"/>
    </source>
</evidence>
<evidence type="ECO:0000305" key="2"/>
<dbReference type="EC" id="5.4.99.12" evidence="1"/>
<dbReference type="EMBL" id="AL049491">
    <property type="protein sequence ID" value="CAB39831.1"/>
    <property type="status" value="ALT_INIT"/>
    <property type="molecule type" value="Genomic_DNA"/>
</dbReference>
<dbReference type="EMBL" id="AL583923">
    <property type="protein sequence ID" value="CAC30910.1"/>
    <property type="status" value="ALT_INIT"/>
    <property type="molecule type" value="Genomic_DNA"/>
</dbReference>
<dbReference type="PIR" id="F87153">
    <property type="entry name" value="F87153"/>
</dbReference>
<dbReference type="SMR" id="Q9X796"/>
<dbReference type="STRING" id="272631.gene:17575807"/>
<dbReference type="KEGG" id="mle:ML1955"/>
<dbReference type="Leproma" id="ML1955"/>
<dbReference type="eggNOG" id="COG0101">
    <property type="taxonomic scope" value="Bacteria"/>
</dbReference>
<dbReference type="HOGENOM" id="CLU_014673_0_2_11"/>
<dbReference type="Proteomes" id="UP000000806">
    <property type="component" value="Chromosome"/>
</dbReference>
<dbReference type="GO" id="GO:0003723">
    <property type="term" value="F:RNA binding"/>
    <property type="evidence" value="ECO:0007669"/>
    <property type="project" value="InterPro"/>
</dbReference>
<dbReference type="GO" id="GO:0160147">
    <property type="term" value="F:tRNA pseudouridine(38-40) synthase activity"/>
    <property type="evidence" value="ECO:0007669"/>
    <property type="project" value="UniProtKB-EC"/>
</dbReference>
<dbReference type="GO" id="GO:0031119">
    <property type="term" value="P:tRNA pseudouridine synthesis"/>
    <property type="evidence" value="ECO:0007669"/>
    <property type="project" value="UniProtKB-UniRule"/>
</dbReference>
<dbReference type="CDD" id="cd02570">
    <property type="entry name" value="PseudoU_synth_EcTruA"/>
    <property type="match status" value="1"/>
</dbReference>
<dbReference type="FunFam" id="3.30.70.580:FF:000008">
    <property type="entry name" value="tRNA pseudouridine synthase A"/>
    <property type="match status" value="1"/>
</dbReference>
<dbReference type="FunFam" id="3.30.70.660:FF:000003">
    <property type="entry name" value="tRNA pseudouridine synthase A"/>
    <property type="match status" value="1"/>
</dbReference>
<dbReference type="Gene3D" id="3.30.70.660">
    <property type="entry name" value="Pseudouridine synthase I, catalytic domain, C-terminal subdomain"/>
    <property type="match status" value="1"/>
</dbReference>
<dbReference type="Gene3D" id="3.30.70.580">
    <property type="entry name" value="Pseudouridine synthase I, catalytic domain, N-terminal subdomain"/>
    <property type="match status" value="1"/>
</dbReference>
<dbReference type="HAMAP" id="MF_00171">
    <property type="entry name" value="TruA"/>
    <property type="match status" value="1"/>
</dbReference>
<dbReference type="InterPro" id="IPR020103">
    <property type="entry name" value="PsdUridine_synth_cat_dom_sf"/>
</dbReference>
<dbReference type="InterPro" id="IPR001406">
    <property type="entry name" value="PsdUridine_synth_TruA"/>
</dbReference>
<dbReference type="InterPro" id="IPR020097">
    <property type="entry name" value="PsdUridine_synth_TruA_a/b_dom"/>
</dbReference>
<dbReference type="InterPro" id="IPR020095">
    <property type="entry name" value="PsdUridine_synth_TruA_C"/>
</dbReference>
<dbReference type="InterPro" id="IPR020094">
    <property type="entry name" value="TruA/RsuA/RluB/E/F_N"/>
</dbReference>
<dbReference type="NCBIfam" id="TIGR00071">
    <property type="entry name" value="hisT_truA"/>
    <property type="match status" value="1"/>
</dbReference>
<dbReference type="PANTHER" id="PTHR11142">
    <property type="entry name" value="PSEUDOURIDYLATE SYNTHASE"/>
    <property type="match status" value="1"/>
</dbReference>
<dbReference type="PANTHER" id="PTHR11142:SF0">
    <property type="entry name" value="TRNA PSEUDOURIDINE SYNTHASE-LIKE 1"/>
    <property type="match status" value="1"/>
</dbReference>
<dbReference type="Pfam" id="PF01416">
    <property type="entry name" value="PseudoU_synth_1"/>
    <property type="match status" value="1"/>
</dbReference>
<dbReference type="PIRSF" id="PIRSF001430">
    <property type="entry name" value="tRNA_psdUrid_synth"/>
    <property type="match status" value="1"/>
</dbReference>
<dbReference type="SUPFAM" id="SSF55120">
    <property type="entry name" value="Pseudouridine synthase"/>
    <property type="match status" value="1"/>
</dbReference>
<feature type="chain" id="PRO_0000057414" description="tRNA pseudouridine synthase A">
    <location>
        <begin position="1"/>
        <end position="286"/>
    </location>
</feature>
<feature type="active site" description="Nucleophile" evidence="1">
    <location>
        <position position="60"/>
    </location>
</feature>
<feature type="binding site" evidence="1">
    <location>
        <position position="132"/>
    </location>
    <ligand>
        <name>substrate</name>
    </ligand>
</feature>
<gene>
    <name evidence="1" type="primary">truA</name>
    <name type="ordered locus">ML1955</name>
    <name type="ORF">MLCB1222.25c</name>
</gene>
<protein>
    <recommendedName>
        <fullName evidence="1">tRNA pseudouridine synthase A</fullName>
        <ecNumber evidence="1">5.4.99.12</ecNumber>
    </recommendedName>
    <alternativeName>
        <fullName evidence="1">tRNA pseudouridine(38-40) synthase</fullName>
    </alternativeName>
    <alternativeName>
        <fullName evidence="1">tRNA pseudouridylate synthase I</fullName>
    </alternativeName>
    <alternativeName>
        <fullName evidence="1">tRNA-uridine isomerase I</fullName>
    </alternativeName>
</protein>